<dbReference type="EC" id="3.6.4.-" evidence="1"/>
<dbReference type="EMBL" id="AE004439">
    <property type="protein sequence ID" value="AAK03921.1"/>
    <property type="molecule type" value="Genomic_DNA"/>
</dbReference>
<dbReference type="RefSeq" id="WP_010907370.1">
    <property type="nucleotide sequence ID" value="NC_002663.1"/>
</dbReference>
<dbReference type="SMR" id="Q9CK01"/>
<dbReference type="STRING" id="272843.PM1837"/>
<dbReference type="EnsemblBacteria" id="AAK03921">
    <property type="protein sequence ID" value="AAK03921"/>
    <property type="gene ID" value="PM1837"/>
</dbReference>
<dbReference type="KEGG" id="pmu:PM1837"/>
<dbReference type="PATRIC" id="fig|272843.6.peg.1861"/>
<dbReference type="HOGENOM" id="CLU_011520_0_0_6"/>
<dbReference type="OrthoDB" id="9814088at2"/>
<dbReference type="Proteomes" id="UP000000809">
    <property type="component" value="Chromosome"/>
</dbReference>
<dbReference type="GO" id="GO:0005524">
    <property type="term" value="F:ATP binding"/>
    <property type="evidence" value="ECO:0007669"/>
    <property type="project" value="UniProtKB-UniRule"/>
</dbReference>
<dbReference type="GO" id="GO:0003677">
    <property type="term" value="F:DNA binding"/>
    <property type="evidence" value="ECO:0007669"/>
    <property type="project" value="UniProtKB-KW"/>
</dbReference>
<dbReference type="GO" id="GO:0004386">
    <property type="term" value="F:helicase activity"/>
    <property type="evidence" value="ECO:0007669"/>
    <property type="project" value="UniProtKB-UniRule"/>
</dbReference>
<dbReference type="GO" id="GO:0016817">
    <property type="term" value="F:hydrolase activity, acting on acid anhydrides"/>
    <property type="evidence" value="ECO:0007669"/>
    <property type="project" value="InterPro"/>
</dbReference>
<dbReference type="GO" id="GO:0006355">
    <property type="term" value="P:regulation of DNA-templated transcription"/>
    <property type="evidence" value="ECO:0007669"/>
    <property type="project" value="UniProtKB-UniRule"/>
</dbReference>
<dbReference type="CDD" id="cd18011">
    <property type="entry name" value="DEXDc_RapA"/>
    <property type="match status" value="1"/>
</dbReference>
<dbReference type="CDD" id="cd18793">
    <property type="entry name" value="SF2_C_SNF"/>
    <property type="match status" value="1"/>
</dbReference>
<dbReference type="Gene3D" id="2.30.30.140">
    <property type="match status" value="1"/>
</dbReference>
<dbReference type="Gene3D" id="2.30.30.930">
    <property type="match status" value="1"/>
</dbReference>
<dbReference type="Gene3D" id="3.30.360.80">
    <property type="match status" value="1"/>
</dbReference>
<dbReference type="Gene3D" id="6.10.140.1500">
    <property type="match status" value="1"/>
</dbReference>
<dbReference type="Gene3D" id="6.10.140.2230">
    <property type="match status" value="1"/>
</dbReference>
<dbReference type="Gene3D" id="3.40.50.300">
    <property type="entry name" value="P-loop containing nucleotide triphosphate hydrolases"/>
    <property type="match status" value="1"/>
</dbReference>
<dbReference type="Gene3D" id="3.40.50.10810">
    <property type="entry name" value="Tandem AAA-ATPase domain"/>
    <property type="match status" value="1"/>
</dbReference>
<dbReference type="HAMAP" id="MF_01821">
    <property type="entry name" value="Helicase_RapA"/>
    <property type="match status" value="1"/>
</dbReference>
<dbReference type="InterPro" id="IPR014001">
    <property type="entry name" value="Helicase_ATP-bd"/>
</dbReference>
<dbReference type="InterPro" id="IPR001650">
    <property type="entry name" value="Helicase_C-like"/>
</dbReference>
<dbReference type="InterPro" id="IPR023949">
    <property type="entry name" value="Helicase_RapA"/>
</dbReference>
<dbReference type="InterPro" id="IPR027417">
    <property type="entry name" value="P-loop_NTPase"/>
</dbReference>
<dbReference type="InterPro" id="IPR022737">
    <property type="entry name" value="RapA_C"/>
</dbReference>
<dbReference type="InterPro" id="IPR038718">
    <property type="entry name" value="SNF2-like_sf"/>
</dbReference>
<dbReference type="InterPro" id="IPR049730">
    <property type="entry name" value="SNF2/RAD54-like_C"/>
</dbReference>
<dbReference type="InterPro" id="IPR000330">
    <property type="entry name" value="SNF2_N"/>
</dbReference>
<dbReference type="InterPro" id="IPR040765">
    <property type="entry name" value="Tudor_1_RapA"/>
</dbReference>
<dbReference type="InterPro" id="IPR040766">
    <property type="entry name" value="Tudor_2_RapA"/>
</dbReference>
<dbReference type="NCBIfam" id="NF003426">
    <property type="entry name" value="PRK04914.1"/>
    <property type="match status" value="1"/>
</dbReference>
<dbReference type="PANTHER" id="PTHR45766">
    <property type="entry name" value="DNA ANNEALING HELICASE AND ENDONUCLEASE ZRANB3 FAMILY MEMBER"/>
    <property type="match status" value="1"/>
</dbReference>
<dbReference type="PANTHER" id="PTHR45766:SF6">
    <property type="entry name" value="SWI_SNF-RELATED MATRIX-ASSOCIATED ACTIN-DEPENDENT REGULATOR OF CHROMATIN SUBFAMILY A-LIKE PROTEIN 1"/>
    <property type="match status" value="1"/>
</dbReference>
<dbReference type="Pfam" id="PF00271">
    <property type="entry name" value="Helicase_C"/>
    <property type="match status" value="1"/>
</dbReference>
<dbReference type="Pfam" id="PF12137">
    <property type="entry name" value="RapA_C"/>
    <property type="match status" value="1"/>
</dbReference>
<dbReference type="Pfam" id="PF00176">
    <property type="entry name" value="SNF2-rel_dom"/>
    <property type="match status" value="1"/>
</dbReference>
<dbReference type="Pfam" id="PF18339">
    <property type="entry name" value="Tudor_1_RapA"/>
    <property type="match status" value="1"/>
</dbReference>
<dbReference type="Pfam" id="PF18337">
    <property type="entry name" value="Tudor_RapA"/>
    <property type="match status" value="1"/>
</dbReference>
<dbReference type="SMART" id="SM00487">
    <property type="entry name" value="DEXDc"/>
    <property type="match status" value="1"/>
</dbReference>
<dbReference type="SMART" id="SM00490">
    <property type="entry name" value="HELICc"/>
    <property type="match status" value="1"/>
</dbReference>
<dbReference type="SUPFAM" id="SSF52540">
    <property type="entry name" value="P-loop containing nucleoside triphosphate hydrolases"/>
    <property type="match status" value="2"/>
</dbReference>
<dbReference type="PROSITE" id="PS51192">
    <property type="entry name" value="HELICASE_ATP_BIND_1"/>
    <property type="match status" value="1"/>
</dbReference>
<dbReference type="PROSITE" id="PS51194">
    <property type="entry name" value="HELICASE_CTER"/>
    <property type="match status" value="1"/>
</dbReference>
<gene>
    <name evidence="1" type="primary">rapA</name>
    <name type="synonym">hepA</name>
    <name type="ordered locus">PM1837</name>
</gene>
<accession>Q9CK01</accession>
<feature type="chain" id="PRO_0000207178" description="RNA polymerase-associated protein RapA">
    <location>
        <begin position="1"/>
        <end position="967"/>
    </location>
</feature>
<feature type="domain" description="Helicase ATP-binding" evidence="1">
    <location>
        <begin position="163"/>
        <end position="337"/>
    </location>
</feature>
<feature type="domain" description="Helicase C-terminal" evidence="1">
    <location>
        <begin position="489"/>
        <end position="660"/>
    </location>
</feature>
<feature type="short sequence motif" description="DEAH box">
    <location>
        <begin position="283"/>
        <end position="286"/>
    </location>
</feature>
<feature type="binding site" evidence="1">
    <location>
        <begin position="176"/>
        <end position="183"/>
    </location>
    <ligand>
        <name>ATP</name>
        <dbReference type="ChEBI" id="CHEBI:30616"/>
    </ligand>
</feature>
<sequence>MTFAVGQRWMSESENNLGLGLIVAIDRRTVTILFPASEEQRIYALNSAPLTRVLFQIGDEIAHHEGWKGNVLDILENNGVAFYLLKRQDNGEEITIQERDIAHQMTFSKPQDRLFTTQIDRNEHFTLRYQALTHQQAQFQSPLRGLRGIRAGLIPHQLHIAREVGQRTAPRVLLADEVGLGKTIEAGMILQQQLFAEKVERVLIIVPETLQHQWLVEMLRRFNLHFALFDEERCADFEDPASALWINPFNTESQIICALDWLCEKPKRVEQLLEAGFDMLIVDEAHHLGWSEHNPSLEYQLVEQLARQIPAVLLLTATPEQLGQESHFARLSLLDPDRFYDYQAFVQEQQQYQPVAEAVQSLLADKPLSAVEKNHISDLLSEQDVEPLLKVLDSQAHDEQKALARQELIDNLIDRHGTSRVLFRNTRQGVKGFPHRTYNQITLELPKQYNNAANVLAMLGEKGDNDSFYPEQMFQKLNPDARWWEFDPRLEWLITFLKNHREEKVLVICRHANTAIQLEQALREKEAIRAAVFHEKLSIVERDRAAAYFAQQEDGAQLLLSSSIGSEGRNFQFASHLVLFNLPDDPDLLEQCIGRLDRIGQRRDIQIHVPCFADTAQVVLARWYHEGLNAFEETCPMGMTLFEAHQTQLNKFLQNPTALEGFAEFVSLTRKQQHELKQALEKGRDRLLELNSNGGEQAQQLATDIAEQDGTTELVNFTLNLFDIIGVDQEDLGEKSIVITLASNMLVPDFPGLKEEGATVTFDRQLSLAREDVEFISWDHPLIRHGIDLITSGDIGKSAVSLLINKALPAGTLLLEMIYVVEAQAPKGLQLTRFLPPTPIRLLLDQKGNNLAEQVSFSALQKQLKPIGKNMANKVVKMVRPNIEQLVKLSEQKIVAQAQQIIHNAQQLADQTLSAELNRLTALQAVNKNIRQDEVDALDNIRSQSLAQLQQATWRLDSLRVIVSNKE</sequence>
<proteinExistence type="inferred from homology"/>
<protein>
    <recommendedName>
        <fullName evidence="1">RNA polymerase-associated protein RapA</fullName>
        <ecNumber evidence="1">3.6.4.-</ecNumber>
    </recommendedName>
    <alternativeName>
        <fullName evidence="1">ATP-dependent helicase HepA</fullName>
    </alternativeName>
</protein>
<comment type="function">
    <text evidence="1">Transcription regulator that activates transcription by stimulating RNA polymerase (RNAP) recycling in case of stress conditions such as supercoiled DNA or high salt concentrations. Probably acts by releasing the RNAP, when it is trapped or immobilized on tightly supercoiled DNA. Does not activate transcription on linear DNA. Probably not involved in DNA repair.</text>
</comment>
<comment type="subunit">
    <text evidence="1">Interacts with the RNAP. Has a higher affinity for the core RNAP than for the holoenzyme. Its ATPase activity is stimulated by binding to RNAP.</text>
</comment>
<comment type="similarity">
    <text evidence="1">Belongs to the SNF2/RAD54 helicase family. RapA subfamily.</text>
</comment>
<evidence type="ECO:0000255" key="1">
    <source>
        <dbReference type="HAMAP-Rule" id="MF_01821"/>
    </source>
</evidence>
<reference key="1">
    <citation type="journal article" date="2001" name="Proc. Natl. Acad. Sci. U.S.A.">
        <title>Complete genomic sequence of Pasteurella multocida Pm70.</title>
        <authorList>
            <person name="May B.J."/>
            <person name="Zhang Q."/>
            <person name="Li L.L."/>
            <person name="Paustian M.L."/>
            <person name="Whittam T.S."/>
            <person name="Kapur V."/>
        </authorList>
    </citation>
    <scope>NUCLEOTIDE SEQUENCE [LARGE SCALE GENOMIC DNA]</scope>
    <source>
        <strain>Pm70</strain>
    </source>
</reference>
<name>RAPA_PASMU</name>
<keyword id="KW-0010">Activator</keyword>
<keyword id="KW-0067">ATP-binding</keyword>
<keyword id="KW-0238">DNA-binding</keyword>
<keyword id="KW-0347">Helicase</keyword>
<keyword id="KW-0378">Hydrolase</keyword>
<keyword id="KW-0547">Nucleotide-binding</keyword>
<keyword id="KW-1185">Reference proteome</keyword>
<keyword id="KW-0804">Transcription</keyword>
<keyword id="KW-0805">Transcription regulation</keyword>
<organism>
    <name type="scientific">Pasteurella multocida (strain Pm70)</name>
    <dbReference type="NCBI Taxonomy" id="272843"/>
    <lineage>
        <taxon>Bacteria</taxon>
        <taxon>Pseudomonadati</taxon>
        <taxon>Pseudomonadota</taxon>
        <taxon>Gammaproteobacteria</taxon>
        <taxon>Pasteurellales</taxon>
        <taxon>Pasteurellaceae</taxon>
        <taxon>Pasteurella</taxon>
    </lineage>
</organism>